<accession>A9MHH3</accession>
<dbReference type="EC" id="4.3.2.1" evidence="1"/>
<dbReference type="EMBL" id="CP000880">
    <property type="protein sequence ID" value="ABX23356.1"/>
    <property type="molecule type" value="Genomic_DNA"/>
</dbReference>
<dbReference type="SMR" id="A9MHH3"/>
<dbReference type="STRING" id="41514.SARI_03541"/>
<dbReference type="KEGG" id="ses:SARI_03541"/>
<dbReference type="HOGENOM" id="CLU_027272_2_3_6"/>
<dbReference type="UniPathway" id="UPA00068">
    <property type="reaction ID" value="UER00114"/>
</dbReference>
<dbReference type="Proteomes" id="UP000002084">
    <property type="component" value="Chromosome"/>
</dbReference>
<dbReference type="GO" id="GO:0005829">
    <property type="term" value="C:cytosol"/>
    <property type="evidence" value="ECO:0007669"/>
    <property type="project" value="TreeGrafter"/>
</dbReference>
<dbReference type="GO" id="GO:0004056">
    <property type="term" value="F:argininosuccinate lyase activity"/>
    <property type="evidence" value="ECO:0007669"/>
    <property type="project" value="UniProtKB-UniRule"/>
</dbReference>
<dbReference type="GO" id="GO:0042450">
    <property type="term" value="P:arginine biosynthetic process via ornithine"/>
    <property type="evidence" value="ECO:0007669"/>
    <property type="project" value="InterPro"/>
</dbReference>
<dbReference type="GO" id="GO:0006526">
    <property type="term" value="P:L-arginine biosynthetic process"/>
    <property type="evidence" value="ECO:0007669"/>
    <property type="project" value="UniProtKB-UniRule"/>
</dbReference>
<dbReference type="CDD" id="cd01359">
    <property type="entry name" value="Argininosuccinate_lyase"/>
    <property type="match status" value="1"/>
</dbReference>
<dbReference type="FunFam" id="1.10.275.10:FF:000004">
    <property type="entry name" value="Argininosuccinate lyase"/>
    <property type="match status" value="1"/>
</dbReference>
<dbReference type="FunFam" id="1.10.40.30:FF:000001">
    <property type="entry name" value="Argininosuccinate lyase"/>
    <property type="match status" value="1"/>
</dbReference>
<dbReference type="FunFam" id="1.20.200.10:FF:000006">
    <property type="entry name" value="Argininosuccinate lyase"/>
    <property type="match status" value="1"/>
</dbReference>
<dbReference type="Gene3D" id="1.10.40.30">
    <property type="entry name" value="Fumarase/aspartase (C-terminal domain)"/>
    <property type="match status" value="1"/>
</dbReference>
<dbReference type="Gene3D" id="1.20.200.10">
    <property type="entry name" value="Fumarase/aspartase (Central domain)"/>
    <property type="match status" value="1"/>
</dbReference>
<dbReference type="Gene3D" id="1.10.275.10">
    <property type="entry name" value="Fumarase/aspartase (N-terminal domain)"/>
    <property type="match status" value="1"/>
</dbReference>
<dbReference type="HAMAP" id="MF_00006">
    <property type="entry name" value="Arg_succ_lyase"/>
    <property type="match status" value="1"/>
</dbReference>
<dbReference type="InterPro" id="IPR029419">
    <property type="entry name" value="Arg_succ_lyase_C"/>
</dbReference>
<dbReference type="InterPro" id="IPR009049">
    <property type="entry name" value="Argininosuccinate_lyase"/>
</dbReference>
<dbReference type="InterPro" id="IPR024083">
    <property type="entry name" value="Fumarase/histidase_N"/>
</dbReference>
<dbReference type="InterPro" id="IPR020557">
    <property type="entry name" value="Fumarate_lyase_CS"/>
</dbReference>
<dbReference type="InterPro" id="IPR000362">
    <property type="entry name" value="Fumarate_lyase_fam"/>
</dbReference>
<dbReference type="InterPro" id="IPR022761">
    <property type="entry name" value="Fumarate_lyase_N"/>
</dbReference>
<dbReference type="InterPro" id="IPR008948">
    <property type="entry name" value="L-Aspartase-like"/>
</dbReference>
<dbReference type="NCBIfam" id="TIGR00838">
    <property type="entry name" value="argH"/>
    <property type="match status" value="1"/>
</dbReference>
<dbReference type="NCBIfam" id="NF008964">
    <property type="entry name" value="PRK12308.1"/>
    <property type="match status" value="1"/>
</dbReference>
<dbReference type="PANTHER" id="PTHR43814">
    <property type="entry name" value="ARGININOSUCCINATE LYASE"/>
    <property type="match status" value="1"/>
</dbReference>
<dbReference type="PANTHER" id="PTHR43814:SF1">
    <property type="entry name" value="ARGININOSUCCINATE LYASE"/>
    <property type="match status" value="1"/>
</dbReference>
<dbReference type="Pfam" id="PF14698">
    <property type="entry name" value="ASL_C2"/>
    <property type="match status" value="1"/>
</dbReference>
<dbReference type="Pfam" id="PF00206">
    <property type="entry name" value="Lyase_1"/>
    <property type="match status" value="1"/>
</dbReference>
<dbReference type="PRINTS" id="PR00145">
    <property type="entry name" value="ARGSUCLYASE"/>
</dbReference>
<dbReference type="PRINTS" id="PR00149">
    <property type="entry name" value="FUMRATELYASE"/>
</dbReference>
<dbReference type="SUPFAM" id="SSF48557">
    <property type="entry name" value="L-aspartase-like"/>
    <property type="match status" value="1"/>
</dbReference>
<dbReference type="PROSITE" id="PS00163">
    <property type="entry name" value="FUMARATE_LYASES"/>
    <property type="match status" value="1"/>
</dbReference>
<keyword id="KW-0028">Amino-acid biosynthesis</keyword>
<keyword id="KW-0055">Arginine biosynthesis</keyword>
<keyword id="KW-0963">Cytoplasm</keyword>
<keyword id="KW-0456">Lyase</keyword>
<keyword id="KW-1185">Reference proteome</keyword>
<proteinExistence type="inferred from homology"/>
<organism>
    <name type="scientific">Salmonella arizonae (strain ATCC BAA-731 / CDC346-86 / RSK2980)</name>
    <dbReference type="NCBI Taxonomy" id="41514"/>
    <lineage>
        <taxon>Bacteria</taxon>
        <taxon>Pseudomonadati</taxon>
        <taxon>Pseudomonadota</taxon>
        <taxon>Gammaproteobacteria</taxon>
        <taxon>Enterobacterales</taxon>
        <taxon>Enterobacteriaceae</taxon>
        <taxon>Salmonella</taxon>
    </lineage>
</organism>
<reference key="1">
    <citation type="submission" date="2007-11" db="EMBL/GenBank/DDBJ databases">
        <authorList>
            <consortium name="The Salmonella enterica serovar Arizonae Genome Sequencing Project"/>
            <person name="McClelland M."/>
            <person name="Sanderson E.K."/>
            <person name="Porwollik S."/>
            <person name="Spieth J."/>
            <person name="Clifton W.S."/>
            <person name="Fulton R."/>
            <person name="Chunyan W."/>
            <person name="Wollam A."/>
            <person name="Shah N."/>
            <person name="Pepin K."/>
            <person name="Bhonagiri V."/>
            <person name="Nash W."/>
            <person name="Johnson M."/>
            <person name="Thiruvilangam P."/>
            <person name="Wilson R."/>
        </authorList>
    </citation>
    <scope>NUCLEOTIDE SEQUENCE [LARGE SCALE GENOMIC DNA]</scope>
    <source>
        <strain>ATCC BAA-731 / CDC346-86 / RSK2980</strain>
    </source>
</reference>
<gene>
    <name evidence="1" type="primary">argH</name>
    <name type="ordered locus">SARI_03541</name>
</gene>
<name>ARLY_SALAR</name>
<sequence length="457" mass="50385">MALWGGRFTQAADQRFKQFNDSLRFDYRLAEQDIVGSVAWSKALVTVGVLTADEQRQLEDALNVLLEEVRANPQQILQSDAEDIHSWVEGKLIDKVGQLGKKLHTGRSRNDQVATDLKLWCKETVRELLTANRQLQSALVETAQANQDAVMPGYTHLQRAQPVTFAHWCLAYVEMLARDESRLQDTLKRLDVSPLGCGALAGTAYEIDREQLAGWLGFTSATRNSLDSVSDRDHVLELLSDAAIGMVHLSRFAEDLIFFNSGEAGFVELSDRVTSGSSLMPQKKNPDALELIRGKCGRVQGALTGMMMTLKGLPLAYNKDMQEDKEGVFDALDTWLDCLHMAALVLDGIQVKRSRCQDAAQQGYANATELADYLVAKGVPFREAHHIVGEAVVEAIRQGKPLEALSLADLQKFSLVISEDVYPILSLQSCLDKRAAKGGVSPQQVAQAIDYAKARLA</sequence>
<feature type="chain" id="PRO_1000073855" description="Argininosuccinate lyase">
    <location>
        <begin position="1"/>
        <end position="457"/>
    </location>
</feature>
<protein>
    <recommendedName>
        <fullName evidence="1">Argininosuccinate lyase</fullName>
        <shortName evidence="1">ASAL</shortName>
        <ecNumber evidence="1">4.3.2.1</ecNumber>
    </recommendedName>
    <alternativeName>
        <fullName evidence="1">Arginosuccinase</fullName>
    </alternativeName>
</protein>
<comment type="catalytic activity">
    <reaction evidence="1">
        <text>2-(N(omega)-L-arginino)succinate = fumarate + L-arginine</text>
        <dbReference type="Rhea" id="RHEA:24020"/>
        <dbReference type="ChEBI" id="CHEBI:29806"/>
        <dbReference type="ChEBI" id="CHEBI:32682"/>
        <dbReference type="ChEBI" id="CHEBI:57472"/>
        <dbReference type="EC" id="4.3.2.1"/>
    </reaction>
</comment>
<comment type="pathway">
    <text evidence="1">Amino-acid biosynthesis; L-arginine biosynthesis; L-arginine from L-ornithine and carbamoyl phosphate: step 3/3.</text>
</comment>
<comment type="subcellular location">
    <subcellularLocation>
        <location evidence="1">Cytoplasm</location>
    </subcellularLocation>
</comment>
<comment type="similarity">
    <text evidence="1">Belongs to the lyase 1 family. Argininosuccinate lyase subfamily.</text>
</comment>
<evidence type="ECO:0000255" key="1">
    <source>
        <dbReference type="HAMAP-Rule" id="MF_00006"/>
    </source>
</evidence>